<organism>
    <name type="scientific">Thermoplasma acidophilum (strain ATCC 25905 / DSM 1728 / JCM 9062 / NBRC 15155 / AMRC-C165)</name>
    <dbReference type="NCBI Taxonomy" id="273075"/>
    <lineage>
        <taxon>Archaea</taxon>
        <taxon>Methanobacteriati</taxon>
        <taxon>Thermoplasmatota</taxon>
        <taxon>Thermoplasmata</taxon>
        <taxon>Thermoplasmatales</taxon>
        <taxon>Thermoplasmataceae</taxon>
        <taxon>Thermoplasma</taxon>
    </lineage>
</organism>
<accession>Q9HM16</accession>
<reference key="1">
    <citation type="journal article" date="2000" name="Nature">
        <title>The genome sequence of the thermoacidophilic scavenger Thermoplasma acidophilum.</title>
        <authorList>
            <person name="Ruepp A."/>
            <person name="Graml W."/>
            <person name="Santos-Martinez M.-L."/>
            <person name="Koretke K.K."/>
            <person name="Volker C."/>
            <person name="Mewes H.-W."/>
            <person name="Frishman D."/>
            <person name="Stocker S."/>
            <person name="Lupas A.N."/>
            <person name="Baumeister W."/>
        </authorList>
    </citation>
    <scope>NUCLEOTIDE SEQUENCE [LARGE SCALE GENOMIC DNA]</scope>
    <source>
        <strain>ATCC 25905 / DSM 1728 / JCM 9062 / NBRC 15155 / AMRC-C165</strain>
    </source>
</reference>
<evidence type="ECO:0000255" key="1">
    <source>
        <dbReference type="HAMAP-Rule" id="MF_00032"/>
    </source>
</evidence>
<evidence type="ECO:0000305" key="2"/>
<sequence length="216" mass="23505">MIRKTSVLRSNFIGIYAKAWDDVAFITMMADEKTVADFQEVLQVDVRRISIDNSSLIGTMMVMNSNGLIVPYGSEITGLGDLDGRNVLQLKDKINAIGNDIIANDHGAIIHKNFSNRSRKEIEDTLGVETIRTTIGNILTVGSAGILTSKGMLVNPETDDDELEFLRDFFKVSVKSGTANFGSIYVGASIVANSKGVLVGKDTTPIEMDRIDDVLS</sequence>
<comment type="function">
    <text evidence="1">Binds to the 50S ribosomal subunit and prevents its association with the 30S ribosomal subunit to form the 70S initiation complex.</text>
</comment>
<comment type="similarity">
    <text evidence="1">Belongs to the eIF-6 family.</text>
</comment>
<comment type="sequence caution" evidence="2">
    <conflict type="erroneous initiation">
        <sequence resource="EMBL-CDS" id="CAC11203"/>
    </conflict>
</comment>
<gene>
    <name evidence="1" type="primary">eif6</name>
    <name type="ordered locus">Ta0055</name>
</gene>
<protein>
    <recommendedName>
        <fullName evidence="1">Translation initiation factor 6</fullName>
        <shortName evidence="1">aIF-6</shortName>
    </recommendedName>
</protein>
<feature type="chain" id="PRO_0000153761" description="Translation initiation factor 6">
    <location>
        <begin position="1"/>
        <end position="216"/>
    </location>
</feature>
<keyword id="KW-0396">Initiation factor</keyword>
<keyword id="KW-0648">Protein biosynthesis</keyword>
<keyword id="KW-1185">Reference proteome</keyword>
<name>IF6_THEAC</name>
<dbReference type="EMBL" id="AL445063">
    <property type="protein sequence ID" value="CAC11203.1"/>
    <property type="status" value="ALT_INIT"/>
    <property type="molecule type" value="Genomic_DNA"/>
</dbReference>
<dbReference type="RefSeq" id="WP_010900483.1">
    <property type="nucleotide sequence ID" value="NC_002578.1"/>
</dbReference>
<dbReference type="SMR" id="Q9HM16"/>
<dbReference type="FunCoup" id="Q9HM16">
    <property type="interactions" value="176"/>
</dbReference>
<dbReference type="STRING" id="273075.gene:9571270"/>
<dbReference type="PaxDb" id="273075-Ta0055m"/>
<dbReference type="EnsemblBacteria" id="CAC11203">
    <property type="protein sequence ID" value="CAC11203"/>
    <property type="gene ID" value="CAC11203"/>
</dbReference>
<dbReference type="KEGG" id="tac:Ta0055"/>
<dbReference type="eggNOG" id="arCOG04176">
    <property type="taxonomic scope" value="Archaea"/>
</dbReference>
<dbReference type="HOGENOM" id="CLU_071894_1_0_2"/>
<dbReference type="InParanoid" id="Q9HM16"/>
<dbReference type="OrthoDB" id="33582at2157"/>
<dbReference type="Proteomes" id="UP000001024">
    <property type="component" value="Chromosome"/>
</dbReference>
<dbReference type="GO" id="GO:0043022">
    <property type="term" value="F:ribosome binding"/>
    <property type="evidence" value="ECO:0007669"/>
    <property type="project" value="InterPro"/>
</dbReference>
<dbReference type="GO" id="GO:0003743">
    <property type="term" value="F:translation initiation factor activity"/>
    <property type="evidence" value="ECO:0007669"/>
    <property type="project" value="UniProtKB-UniRule"/>
</dbReference>
<dbReference type="GO" id="GO:0042256">
    <property type="term" value="P:cytosolic ribosome assembly"/>
    <property type="evidence" value="ECO:0007669"/>
    <property type="project" value="InterPro"/>
</dbReference>
<dbReference type="CDD" id="cd00527">
    <property type="entry name" value="IF6"/>
    <property type="match status" value="1"/>
</dbReference>
<dbReference type="Gene3D" id="3.75.10.10">
    <property type="entry name" value="L-arginine/glycine Amidinotransferase, Chain A"/>
    <property type="match status" value="1"/>
</dbReference>
<dbReference type="HAMAP" id="MF_00032">
    <property type="entry name" value="eIF_6"/>
    <property type="match status" value="1"/>
</dbReference>
<dbReference type="InterPro" id="IPR002769">
    <property type="entry name" value="eIF6"/>
</dbReference>
<dbReference type="NCBIfam" id="TIGR00323">
    <property type="entry name" value="eIF-6"/>
    <property type="match status" value="1"/>
</dbReference>
<dbReference type="NCBIfam" id="NF003131">
    <property type="entry name" value="PRK04046.2-2"/>
    <property type="match status" value="1"/>
</dbReference>
<dbReference type="PANTHER" id="PTHR10784">
    <property type="entry name" value="TRANSLATION INITIATION FACTOR 6"/>
    <property type="match status" value="1"/>
</dbReference>
<dbReference type="Pfam" id="PF01912">
    <property type="entry name" value="eIF-6"/>
    <property type="match status" value="1"/>
</dbReference>
<dbReference type="PIRSF" id="PIRSF006413">
    <property type="entry name" value="IF-6"/>
    <property type="match status" value="1"/>
</dbReference>
<dbReference type="SMART" id="SM00654">
    <property type="entry name" value="eIF6"/>
    <property type="match status" value="1"/>
</dbReference>
<dbReference type="SUPFAM" id="SSF55909">
    <property type="entry name" value="Pentein"/>
    <property type="match status" value="1"/>
</dbReference>
<proteinExistence type="inferred from homology"/>